<dbReference type="EC" id="2.7.1.170" evidence="1"/>
<dbReference type="EMBL" id="CP000266">
    <property type="protein sequence ID" value="ABF03830.1"/>
    <property type="molecule type" value="Genomic_DNA"/>
</dbReference>
<dbReference type="RefSeq" id="WP_000835080.1">
    <property type="nucleotide sequence ID" value="NC_008258.1"/>
</dbReference>
<dbReference type="SMR" id="Q0T4D5"/>
<dbReference type="KEGG" id="sfv:SFV_1659"/>
<dbReference type="HOGENOM" id="CLU_038782_0_0_6"/>
<dbReference type="UniPathway" id="UPA00343"/>
<dbReference type="UniPathway" id="UPA00544"/>
<dbReference type="Proteomes" id="UP000000659">
    <property type="component" value="Chromosome"/>
</dbReference>
<dbReference type="GO" id="GO:0005524">
    <property type="term" value="F:ATP binding"/>
    <property type="evidence" value="ECO:0007669"/>
    <property type="project" value="UniProtKB-UniRule"/>
</dbReference>
<dbReference type="GO" id="GO:0016301">
    <property type="term" value="F:kinase activity"/>
    <property type="evidence" value="ECO:0007669"/>
    <property type="project" value="UniProtKB-KW"/>
</dbReference>
<dbReference type="GO" id="GO:0016773">
    <property type="term" value="F:phosphotransferase activity, alcohol group as acceptor"/>
    <property type="evidence" value="ECO:0007669"/>
    <property type="project" value="UniProtKB-UniRule"/>
</dbReference>
<dbReference type="GO" id="GO:0097175">
    <property type="term" value="P:1,6-anhydro-N-acetyl-beta-muramic acid catabolic process"/>
    <property type="evidence" value="ECO:0007669"/>
    <property type="project" value="UniProtKB-UniRule"/>
</dbReference>
<dbReference type="GO" id="GO:0006040">
    <property type="term" value="P:amino sugar metabolic process"/>
    <property type="evidence" value="ECO:0007669"/>
    <property type="project" value="InterPro"/>
</dbReference>
<dbReference type="GO" id="GO:0009254">
    <property type="term" value="P:peptidoglycan turnover"/>
    <property type="evidence" value="ECO:0007669"/>
    <property type="project" value="UniProtKB-UniRule"/>
</dbReference>
<dbReference type="CDD" id="cd24050">
    <property type="entry name" value="ASKHA_NBD_ANMK"/>
    <property type="match status" value="1"/>
</dbReference>
<dbReference type="Gene3D" id="3.30.420.40">
    <property type="match status" value="2"/>
</dbReference>
<dbReference type="HAMAP" id="MF_01270">
    <property type="entry name" value="AnhMurNAc_kinase"/>
    <property type="match status" value="1"/>
</dbReference>
<dbReference type="InterPro" id="IPR005338">
    <property type="entry name" value="Anhydro_N_Ac-Mur_kinase"/>
</dbReference>
<dbReference type="InterPro" id="IPR043129">
    <property type="entry name" value="ATPase_NBD"/>
</dbReference>
<dbReference type="NCBIfam" id="NF007138">
    <property type="entry name" value="PRK09585.1-1"/>
    <property type="match status" value="1"/>
</dbReference>
<dbReference type="NCBIfam" id="NF007139">
    <property type="entry name" value="PRK09585.1-3"/>
    <property type="match status" value="1"/>
</dbReference>
<dbReference type="NCBIfam" id="NF007148">
    <property type="entry name" value="PRK09585.3-2"/>
    <property type="match status" value="1"/>
</dbReference>
<dbReference type="PANTHER" id="PTHR30605">
    <property type="entry name" value="ANHYDRO-N-ACETYLMURAMIC ACID KINASE"/>
    <property type="match status" value="1"/>
</dbReference>
<dbReference type="PANTHER" id="PTHR30605:SF0">
    <property type="entry name" value="ANHYDRO-N-ACETYLMURAMIC ACID KINASE"/>
    <property type="match status" value="1"/>
</dbReference>
<dbReference type="Pfam" id="PF03702">
    <property type="entry name" value="AnmK"/>
    <property type="match status" value="1"/>
</dbReference>
<dbReference type="SUPFAM" id="SSF53067">
    <property type="entry name" value="Actin-like ATPase domain"/>
    <property type="match status" value="1"/>
</dbReference>
<comment type="function">
    <text evidence="1">Catalyzes the specific phosphorylation of 1,6-anhydro-N-acetylmuramic acid (anhMurNAc) with the simultaneous cleavage of the 1,6-anhydro ring, generating MurNAc-6-P. Is required for the utilization of anhMurNAc either imported from the medium or derived from its own cell wall murein, and thus plays a role in cell wall recycling.</text>
</comment>
<comment type="catalytic activity">
    <reaction evidence="1">
        <text>1,6-anhydro-N-acetyl-beta-muramate + ATP + H2O = N-acetyl-D-muramate 6-phosphate + ADP + H(+)</text>
        <dbReference type="Rhea" id="RHEA:24952"/>
        <dbReference type="ChEBI" id="CHEBI:15377"/>
        <dbReference type="ChEBI" id="CHEBI:15378"/>
        <dbReference type="ChEBI" id="CHEBI:30616"/>
        <dbReference type="ChEBI" id="CHEBI:58690"/>
        <dbReference type="ChEBI" id="CHEBI:58722"/>
        <dbReference type="ChEBI" id="CHEBI:456216"/>
        <dbReference type="EC" id="2.7.1.170"/>
    </reaction>
</comment>
<comment type="pathway">
    <text evidence="1">Amino-sugar metabolism; 1,6-anhydro-N-acetylmuramate degradation.</text>
</comment>
<comment type="pathway">
    <text evidence="1">Cell wall biogenesis; peptidoglycan recycling.</text>
</comment>
<comment type="similarity">
    <text evidence="1">Belongs to the anhydro-N-acetylmuramic acid kinase family.</text>
</comment>
<sequence length="369" mass="39558">MKSGRFIGVMSGTSLDGVDVVLATIDEHRVAQLASLSWPIPVSLKQAVLDICQGQQLTLSQFGQLDTQLGRLFADAVNALLKEQNLQARDIVAIGCHGQTVWHEPTGVAPHTLQIGDNNQIVARTGITVVGDFRRRDIALGGQGAPLVPAFHHALLAHPTERRMVLNIGGIANLSLLIPGQPVGGYDTGPGNMLMDAWIWRQAGKPYDKDAEWARAGKVILPLLQNMLSDPYFSQPAPKSTGREYFNYGWLERHLRHFPGVDPRDVQATLAELTAVTISEQVLLSGGCERLMVCGGGSRNPLLMARLAVLLLGTEVTTTDAVGISGDDMEALAFAWLAWRTLAGLPGNLPSVTGASQETVLGAIFPANS</sequence>
<keyword id="KW-0067">ATP-binding</keyword>
<keyword id="KW-0119">Carbohydrate metabolism</keyword>
<keyword id="KW-0418">Kinase</keyword>
<keyword id="KW-0547">Nucleotide-binding</keyword>
<keyword id="KW-0808">Transferase</keyword>
<evidence type="ECO:0000255" key="1">
    <source>
        <dbReference type="HAMAP-Rule" id="MF_01270"/>
    </source>
</evidence>
<reference key="1">
    <citation type="journal article" date="2006" name="BMC Genomics">
        <title>Complete genome sequence of Shigella flexneri 5b and comparison with Shigella flexneri 2a.</title>
        <authorList>
            <person name="Nie H."/>
            <person name="Yang F."/>
            <person name="Zhang X."/>
            <person name="Yang J."/>
            <person name="Chen L."/>
            <person name="Wang J."/>
            <person name="Xiong Z."/>
            <person name="Peng J."/>
            <person name="Sun L."/>
            <person name="Dong J."/>
            <person name="Xue Y."/>
            <person name="Xu X."/>
            <person name="Chen S."/>
            <person name="Yao Z."/>
            <person name="Shen Y."/>
            <person name="Jin Q."/>
        </authorList>
    </citation>
    <scope>NUCLEOTIDE SEQUENCE [LARGE SCALE GENOMIC DNA]</scope>
    <source>
        <strain>8401</strain>
    </source>
</reference>
<name>ANMK_SHIF8</name>
<proteinExistence type="inferred from homology"/>
<organism>
    <name type="scientific">Shigella flexneri serotype 5b (strain 8401)</name>
    <dbReference type="NCBI Taxonomy" id="373384"/>
    <lineage>
        <taxon>Bacteria</taxon>
        <taxon>Pseudomonadati</taxon>
        <taxon>Pseudomonadota</taxon>
        <taxon>Gammaproteobacteria</taxon>
        <taxon>Enterobacterales</taxon>
        <taxon>Enterobacteriaceae</taxon>
        <taxon>Shigella</taxon>
    </lineage>
</organism>
<protein>
    <recommendedName>
        <fullName evidence="1">Anhydro-N-acetylmuramic acid kinase</fullName>
        <ecNumber evidence="1">2.7.1.170</ecNumber>
    </recommendedName>
    <alternativeName>
        <fullName evidence="1">AnhMurNAc kinase</fullName>
    </alternativeName>
</protein>
<feature type="chain" id="PRO_1000067369" description="Anhydro-N-acetylmuramic acid kinase">
    <location>
        <begin position="1"/>
        <end position="369"/>
    </location>
</feature>
<feature type="binding site" evidence="1">
    <location>
        <begin position="12"/>
        <end position="19"/>
    </location>
    <ligand>
        <name>ATP</name>
        <dbReference type="ChEBI" id="CHEBI:30616"/>
    </ligand>
</feature>
<accession>Q0T4D5</accession>
<gene>
    <name evidence="1" type="primary">anmK</name>
    <name type="ordered locus">SFV_1659</name>
</gene>